<dbReference type="EMBL" id="AE017283">
    <property type="protein sequence ID" value="AAT83573.1"/>
    <property type="molecule type" value="Genomic_DNA"/>
</dbReference>
<dbReference type="RefSeq" id="WP_002514855.1">
    <property type="nucleotide sequence ID" value="NZ_CP025935.1"/>
</dbReference>
<dbReference type="PDB" id="8CRX">
    <property type="method" value="EM"/>
    <property type="resolution" value="2.78 A"/>
    <property type="chains" value="H=1-135"/>
</dbReference>
<dbReference type="PDB" id="8CWO">
    <property type="method" value="EM"/>
    <property type="resolution" value="2.84 A"/>
    <property type="chains" value="H=1-135"/>
</dbReference>
<dbReference type="PDBsum" id="8CRX"/>
<dbReference type="PDBsum" id="8CWO"/>
<dbReference type="SMR" id="Q6A6P0"/>
<dbReference type="EnsemblBacteria" id="AAT83573">
    <property type="protein sequence ID" value="AAT83573"/>
    <property type="gene ID" value="PPA1848"/>
</dbReference>
<dbReference type="GeneID" id="92857796"/>
<dbReference type="KEGG" id="pac:PPA1848"/>
<dbReference type="eggNOG" id="COG0096">
    <property type="taxonomic scope" value="Bacteria"/>
</dbReference>
<dbReference type="HOGENOM" id="CLU_098428_0_1_11"/>
<dbReference type="Proteomes" id="UP000000603">
    <property type="component" value="Chromosome"/>
</dbReference>
<dbReference type="GO" id="GO:1990904">
    <property type="term" value="C:ribonucleoprotein complex"/>
    <property type="evidence" value="ECO:0007669"/>
    <property type="project" value="UniProtKB-KW"/>
</dbReference>
<dbReference type="GO" id="GO:0005840">
    <property type="term" value="C:ribosome"/>
    <property type="evidence" value="ECO:0007669"/>
    <property type="project" value="UniProtKB-KW"/>
</dbReference>
<dbReference type="GO" id="GO:0019843">
    <property type="term" value="F:rRNA binding"/>
    <property type="evidence" value="ECO:0007669"/>
    <property type="project" value="UniProtKB-UniRule"/>
</dbReference>
<dbReference type="GO" id="GO:0003735">
    <property type="term" value="F:structural constituent of ribosome"/>
    <property type="evidence" value="ECO:0007669"/>
    <property type="project" value="InterPro"/>
</dbReference>
<dbReference type="GO" id="GO:0006412">
    <property type="term" value="P:translation"/>
    <property type="evidence" value="ECO:0007669"/>
    <property type="project" value="UniProtKB-UniRule"/>
</dbReference>
<dbReference type="FunFam" id="3.30.1370.30:FF:000002">
    <property type="entry name" value="30S ribosomal protein S8"/>
    <property type="match status" value="1"/>
</dbReference>
<dbReference type="FunFam" id="3.30.1490.10:FF:000001">
    <property type="entry name" value="30S ribosomal protein S8"/>
    <property type="match status" value="1"/>
</dbReference>
<dbReference type="Gene3D" id="3.30.1370.30">
    <property type="match status" value="1"/>
</dbReference>
<dbReference type="Gene3D" id="3.30.1490.10">
    <property type="match status" value="1"/>
</dbReference>
<dbReference type="HAMAP" id="MF_01302_B">
    <property type="entry name" value="Ribosomal_uS8_B"/>
    <property type="match status" value="1"/>
</dbReference>
<dbReference type="InterPro" id="IPR000630">
    <property type="entry name" value="Ribosomal_uS8"/>
</dbReference>
<dbReference type="InterPro" id="IPR047863">
    <property type="entry name" value="Ribosomal_uS8_CS"/>
</dbReference>
<dbReference type="InterPro" id="IPR035987">
    <property type="entry name" value="Ribosomal_uS8_sf"/>
</dbReference>
<dbReference type="NCBIfam" id="NF001109">
    <property type="entry name" value="PRK00136.1"/>
    <property type="match status" value="1"/>
</dbReference>
<dbReference type="PANTHER" id="PTHR11758">
    <property type="entry name" value="40S RIBOSOMAL PROTEIN S15A"/>
    <property type="match status" value="1"/>
</dbReference>
<dbReference type="Pfam" id="PF00410">
    <property type="entry name" value="Ribosomal_S8"/>
    <property type="match status" value="1"/>
</dbReference>
<dbReference type="SUPFAM" id="SSF56047">
    <property type="entry name" value="Ribosomal protein S8"/>
    <property type="match status" value="1"/>
</dbReference>
<dbReference type="PROSITE" id="PS00053">
    <property type="entry name" value="RIBOSOMAL_S8"/>
    <property type="match status" value="1"/>
</dbReference>
<organism>
    <name type="scientific">Cutibacterium acnes (strain DSM 16379 / KPA171202)</name>
    <name type="common">Propionibacterium acnes</name>
    <dbReference type="NCBI Taxonomy" id="267747"/>
    <lineage>
        <taxon>Bacteria</taxon>
        <taxon>Bacillati</taxon>
        <taxon>Actinomycetota</taxon>
        <taxon>Actinomycetes</taxon>
        <taxon>Propionibacteriales</taxon>
        <taxon>Propionibacteriaceae</taxon>
        <taxon>Cutibacterium</taxon>
    </lineage>
</organism>
<gene>
    <name evidence="1" type="primary">rpsH</name>
    <name type="ordered locus">PPA1848</name>
</gene>
<name>RS8_CUTAK</name>
<evidence type="ECO:0000255" key="1">
    <source>
        <dbReference type="HAMAP-Rule" id="MF_01302"/>
    </source>
</evidence>
<evidence type="ECO:0000305" key="2"/>
<evidence type="ECO:0007829" key="3">
    <source>
        <dbReference type="PDB" id="8CWO"/>
    </source>
</evidence>
<comment type="function">
    <text evidence="1">One of the primary rRNA binding proteins, it binds directly to 16S rRNA central domain where it helps coordinate assembly of the platform of the 30S subunit.</text>
</comment>
<comment type="subunit">
    <text evidence="1">Part of the 30S ribosomal subunit. Contacts proteins S5 and S12.</text>
</comment>
<comment type="similarity">
    <text evidence="1">Belongs to the universal ribosomal protein uS8 family.</text>
</comment>
<sequence length="135" mass="14656">MTMTDPIADMLTRLRNANQAYHDQTSMPHSKIKAGIAGILKSEGYIADYKVNEPKEGEVGKTLTLTLKYGENRERSIAGVRRISKPGLRVYAKSTALPKVLGGLGIAIISTSQGLLTDKQAHEKSVGGEVLAYVW</sequence>
<keyword id="KW-0002">3D-structure</keyword>
<keyword id="KW-0687">Ribonucleoprotein</keyword>
<keyword id="KW-0689">Ribosomal protein</keyword>
<keyword id="KW-0694">RNA-binding</keyword>
<keyword id="KW-0699">rRNA-binding</keyword>
<protein>
    <recommendedName>
        <fullName evidence="1">Small ribosomal subunit protein uS8</fullName>
    </recommendedName>
    <alternativeName>
        <fullName evidence="2">30S ribosomal protein S8</fullName>
    </alternativeName>
</protein>
<accession>Q6A6P0</accession>
<proteinExistence type="evidence at protein level"/>
<reference key="1">
    <citation type="journal article" date="2004" name="Science">
        <title>The complete genome sequence of Propionibacterium acnes, a commensal of human skin.</title>
        <authorList>
            <person name="Brueggemann H."/>
            <person name="Henne A."/>
            <person name="Hoster F."/>
            <person name="Liesegang H."/>
            <person name="Wiezer A."/>
            <person name="Strittmatter A."/>
            <person name="Hujer S."/>
            <person name="Duerre P."/>
            <person name="Gottschalk G."/>
        </authorList>
    </citation>
    <scope>NUCLEOTIDE SEQUENCE [LARGE SCALE GENOMIC DNA]</scope>
    <source>
        <strain>DSM 16379 / KPA171202</strain>
    </source>
</reference>
<feature type="chain" id="PRO_0000126462" description="Small ribosomal subunit protein uS8">
    <location>
        <begin position="1"/>
        <end position="135"/>
    </location>
</feature>
<feature type="helix" evidence="3">
    <location>
        <begin position="6"/>
        <end position="19"/>
    </location>
</feature>
<feature type="strand" evidence="3">
    <location>
        <begin position="23"/>
        <end position="28"/>
    </location>
</feature>
<feature type="helix" evidence="3">
    <location>
        <begin position="31"/>
        <end position="42"/>
    </location>
</feature>
<feature type="strand" evidence="3">
    <location>
        <begin position="45"/>
        <end position="52"/>
    </location>
</feature>
<feature type="strand" evidence="3">
    <location>
        <begin position="55"/>
        <end position="60"/>
    </location>
</feature>
<feature type="strand" evidence="3">
    <location>
        <begin position="62"/>
        <end position="66"/>
    </location>
</feature>
<feature type="turn" evidence="3">
    <location>
        <begin position="71"/>
        <end position="73"/>
    </location>
</feature>
<feature type="strand" evidence="3">
    <location>
        <begin position="74"/>
        <end position="76"/>
    </location>
</feature>
<feature type="strand" evidence="3">
    <location>
        <begin position="86"/>
        <end position="88"/>
    </location>
</feature>
<feature type="strand" evidence="3">
    <location>
        <begin position="94"/>
        <end position="96"/>
    </location>
</feature>
<feature type="helix" evidence="3">
    <location>
        <begin position="101"/>
        <end position="103"/>
    </location>
</feature>
<feature type="strand" evidence="3">
    <location>
        <begin position="108"/>
        <end position="111"/>
    </location>
</feature>
<feature type="strand" evidence="3">
    <location>
        <begin position="114"/>
        <end position="117"/>
    </location>
</feature>
<feature type="helix" evidence="3">
    <location>
        <begin position="118"/>
        <end position="124"/>
    </location>
</feature>
<feature type="strand" evidence="3">
    <location>
        <begin position="128"/>
        <end position="132"/>
    </location>
</feature>